<organism>
    <name type="scientific">Mus musculus</name>
    <name type="common">Mouse</name>
    <dbReference type="NCBI Taxonomy" id="10090"/>
    <lineage>
        <taxon>Eukaryota</taxon>
        <taxon>Metazoa</taxon>
        <taxon>Chordata</taxon>
        <taxon>Craniata</taxon>
        <taxon>Vertebrata</taxon>
        <taxon>Euteleostomi</taxon>
        <taxon>Mammalia</taxon>
        <taxon>Eutheria</taxon>
        <taxon>Euarchontoglires</taxon>
        <taxon>Glires</taxon>
        <taxon>Rodentia</taxon>
        <taxon>Myomorpha</taxon>
        <taxon>Muroidea</taxon>
        <taxon>Muridae</taxon>
        <taxon>Murinae</taxon>
        <taxon>Mus</taxon>
        <taxon>Mus</taxon>
    </lineage>
</organism>
<name>OMGP_MOUSE</name>
<dbReference type="EMBL" id="S67043">
    <property type="protein sequence ID" value="AAB28991.2"/>
    <property type="molecule type" value="Genomic_DNA"/>
</dbReference>
<dbReference type="EMBL" id="BC024757">
    <property type="protein sequence ID" value="AAH24757.1"/>
    <property type="molecule type" value="mRNA"/>
</dbReference>
<dbReference type="PIR" id="A47530">
    <property type="entry name" value="A47530"/>
</dbReference>
<dbReference type="RefSeq" id="NP_062282.2">
    <property type="nucleotide sequence ID" value="NM_019409.2"/>
</dbReference>
<dbReference type="SMR" id="Q63912"/>
<dbReference type="BioGRID" id="201963">
    <property type="interactions" value="3"/>
</dbReference>
<dbReference type="FunCoup" id="Q63912">
    <property type="interactions" value="441"/>
</dbReference>
<dbReference type="IntAct" id="Q63912">
    <property type="interactions" value="2"/>
</dbReference>
<dbReference type="MINT" id="Q63912"/>
<dbReference type="STRING" id="10090.ENSMUSP00000132918"/>
<dbReference type="GlyConnect" id="2569">
    <property type="glycosylation" value="16 N-Linked glycans (3 sites)"/>
</dbReference>
<dbReference type="GlyCosmos" id="Q63912">
    <property type="glycosylation" value="11 sites, 16 glycans"/>
</dbReference>
<dbReference type="GlyGen" id="Q63912">
    <property type="glycosylation" value="13 sites, 23 N-linked glycans (8 sites), 1 O-linked glycan (1 site)"/>
</dbReference>
<dbReference type="iPTMnet" id="Q63912"/>
<dbReference type="PhosphoSitePlus" id="Q63912"/>
<dbReference type="SwissPalm" id="Q63912"/>
<dbReference type="PaxDb" id="10090-ENSMUSP00000132918"/>
<dbReference type="PeptideAtlas" id="Q63912"/>
<dbReference type="ProteomicsDB" id="293846"/>
<dbReference type="DNASU" id="18377"/>
<dbReference type="GeneID" id="18377"/>
<dbReference type="KEGG" id="mmu:18377"/>
<dbReference type="AGR" id="MGI:106586"/>
<dbReference type="CTD" id="4974"/>
<dbReference type="MGI" id="MGI:106586">
    <property type="gene designation" value="Omg"/>
</dbReference>
<dbReference type="eggNOG" id="KOG0619">
    <property type="taxonomic scope" value="Eukaryota"/>
</dbReference>
<dbReference type="InParanoid" id="Q63912"/>
<dbReference type="OrthoDB" id="1574204at2759"/>
<dbReference type="PhylomeDB" id="Q63912"/>
<dbReference type="Reactome" id="R-MMU-193634">
    <property type="pathway name" value="Axonal growth inhibition (RHOA activation)"/>
</dbReference>
<dbReference type="BioGRID-ORCS" id="18377">
    <property type="hits" value="1 hit in 75 CRISPR screens"/>
</dbReference>
<dbReference type="CD-CODE" id="CE726F99">
    <property type="entry name" value="Postsynaptic density"/>
</dbReference>
<dbReference type="ChiTaRS" id="Omg">
    <property type="organism name" value="mouse"/>
</dbReference>
<dbReference type="PRO" id="PR:Q63912"/>
<dbReference type="Proteomes" id="UP000000589">
    <property type="component" value="Unplaced"/>
</dbReference>
<dbReference type="RNAct" id="Q63912">
    <property type="molecule type" value="protein"/>
</dbReference>
<dbReference type="GO" id="GO:0043209">
    <property type="term" value="C:myelin sheath"/>
    <property type="evidence" value="ECO:0000266"/>
    <property type="project" value="MGI"/>
</dbReference>
<dbReference type="GO" id="GO:0005886">
    <property type="term" value="C:plasma membrane"/>
    <property type="evidence" value="ECO:0000266"/>
    <property type="project" value="MGI"/>
</dbReference>
<dbReference type="GO" id="GO:0098552">
    <property type="term" value="C:side of membrane"/>
    <property type="evidence" value="ECO:0007669"/>
    <property type="project" value="UniProtKB-KW"/>
</dbReference>
<dbReference type="GO" id="GO:0042802">
    <property type="term" value="F:identical protein binding"/>
    <property type="evidence" value="ECO:0000314"/>
    <property type="project" value="MGI"/>
</dbReference>
<dbReference type="GO" id="GO:0042803">
    <property type="term" value="F:protein homodimerization activity"/>
    <property type="evidence" value="ECO:0000266"/>
    <property type="project" value="MGI"/>
</dbReference>
<dbReference type="GO" id="GO:0007155">
    <property type="term" value="P:cell adhesion"/>
    <property type="evidence" value="ECO:0007669"/>
    <property type="project" value="UniProtKB-KW"/>
</dbReference>
<dbReference type="GO" id="GO:0022010">
    <property type="term" value="P:central nervous system myelination"/>
    <property type="evidence" value="ECO:0000266"/>
    <property type="project" value="MGI"/>
</dbReference>
<dbReference type="GO" id="GO:0031102">
    <property type="term" value="P:neuron projection regeneration"/>
    <property type="evidence" value="ECO:0000315"/>
    <property type="project" value="MGI"/>
</dbReference>
<dbReference type="GO" id="GO:0048683">
    <property type="term" value="P:regulation of collateral sprouting of intact axon in response to injury"/>
    <property type="evidence" value="ECO:0000315"/>
    <property type="project" value="MGI"/>
</dbReference>
<dbReference type="FunFam" id="3.80.10.10:FF:000180">
    <property type="entry name" value="Oligodendrocyte myelin glycoprotein"/>
    <property type="match status" value="1"/>
</dbReference>
<dbReference type="FunFam" id="3.80.10.10:FF:000445">
    <property type="entry name" value="Oligodendrocyte myelin glycoprotein b"/>
    <property type="match status" value="1"/>
</dbReference>
<dbReference type="Gene3D" id="3.80.10.10">
    <property type="entry name" value="Ribonuclease Inhibitor"/>
    <property type="match status" value="2"/>
</dbReference>
<dbReference type="InterPro" id="IPR001611">
    <property type="entry name" value="Leu-rich_rpt"/>
</dbReference>
<dbReference type="InterPro" id="IPR003591">
    <property type="entry name" value="Leu-rich_rpt_typical-subtyp"/>
</dbReference>
<dbReference type="InterPro" id="IPR051071">
    <property type="entry name" value="LRR-bact_E3_ubiq_ligases"/>
</dbReference>
<dbReference type="InterPro" id="IPR032675">
    <property type="entry name" value="LRR_dom_sf"/>
</dbReference>
<dbReference type="InterPro" id="IPR000372">
    <property type="entry name" value="LRRNT"/>
</dbReference>
<dbReference type="PANTHER" id="PTHR47114">
    <property type="match status" value="1"/>
</dbReference>
<dbReference type="PANTHER" id="PTHR47114:SF2">
    <property type="entry name" value="OLIGODENDROCYTE-MYELIN GLYCOPROTEIN"/>
    <property type="match status" value="1"/>
</dbReference>
<dbReference type="Pfam" id="PF00560">
    <property type="entry name" value="LRR_1"/>
    <property type="match status" value="2"/>
</dbReference>
<dbReference type="Pfam" id="PF13855">
    <property type="entry name" value="LRR_8"/>
    <property type="match status" value="1"/>
</dbReference>
<dbReference type="Pfam" id="PF01462">
    <property type="entry name" value="LRRNT"/>
    <property type="match status" value="1"/>
</dbReference>
<dbReference type="PRINTS" id="PR00019">
    <property type="entry name" value="LEURICHRPT"/>
</dbReference>
<dbReference type="SMART" id="SM00369">
    <property type="entry name" value="LRR_TYP"/>
    <property type="match status" value="4"/>
</dbReference>
<dbReference type="SMART" id="SM00013">
    <property type="entry name" value="LRRNT"/>
    <property type="match status" value="1"/>
</dbReference>
<dbReference type="SUPFAM" id="SSF52058">
    <property type="entry name" value="L domain-like"/>
    <property type="match status" value="1"/>
</dbReference>
<dbReference type="PROSITE" id="PS51450">
    <property type="entry name" value="LRR"/>
    <property type="match status" value="6"/>
</dbReference>
<keyword id="KW-0130">Cell adhesion</keyword>
<keyword id="KW-1003">Cell membrane</keyword>
<keyword id="KW-0325">Glycoprotein</keyword>
<keyword id="KW-0336">GPI-anchor</keyword>
<keyword id="KW-0433">Leucine-rich repeat</keyword>
<keyword id="KW-0449">Lipoprotein</keyword>
<keyword id="KW-0472">Membrane</keyword>
<keyword id="KW-1185">Reference proteome</keyword>
<keyword id="KW-0677">Repeat</keyword>
<keyword id="KW-0732">Signal</keyword>
<feature type="signal peptide" evidence="1">
    <location>
        <begin position="1"/>
        <end position="24"/>
    </location>
</feature>
<feature type="chain" id="PRO_0000021890" description="Oligodendrocyte-myelin glycoprotein">
    <location>
        <begin position="25"/>
        <end position="417"/>
    </location>
</feature>
<feature type="propeptide" id="PRO_0000021891" description="Removed in mature form" evidence="2">
    <location>
        <begin position="418"/>
        <end position="440"/>
    </location>
</feature>
<feature type="domain" description="LRRNT">
    <location>
        <begin position="25"/>
        <end position="55"/>
    </location>
</feature>
<feature type="repeat" description="LRR 1">
    <location>
        <begin position="56"/>
        <end position="78"/>
    </location>
</feature>
<feature type="repeat" description="LRR 2">
    <location>
        <begin position="79"/>
        <end position="100"/>
    </location>
</feature>
<feature type="repeat" description="LRR 3">
    <location>
        <begin position="101"/>
        <end position="121"/>
    </location>
</feature>
<feature type="repeat" description="LRR 4">
    <location>
        <begin position="124"/>
        <end position="145"/>
    </location>
</feature>
<feature type="repeat" description="LRR 5">
    <location>
        <begin position="147"/>
        <end position="168"/>
    </location>
</feature>
<feature type="repeat" description="LRR 6">
    <location>
        <begin position="169"/>
        <end position="189"/>
    </location>
</feature>
<feature type="repeat" description="LRR 7">
    <location>
        <begin position="192"/>
        <end position="213"/>
    </location>
</feature>
<feature type="repeat" description="LRR 8">
    <location>
        <begin position="216"/>
        <end position="239"/>
    </location>
</feature>
<feature type="repeat" description="Ser/Thr-rich">
    <location>
        <begin position="229"/>
        <end position="270"/>
    </location>
</feature>
<feature type="repeat" description="Ser/Thr-rich">
    <location>
        <begin position="271"/>
        <end position="292"/>
    </location>
</feature>
<feature type="repeat" description="Ser/Thr-rich">
    <location>
        <begin position="293"/>
        <end position="335"/>
    </location>
</feature>
<feature type="repeat" description="Ser/Thr-rich">
    <location>
        <begin position="336"/>
        <end position="377"/>
    </location>
</feature>
<feature type="repeat" description="Ser/Thr-rich">
    <location>
        <begin position="378"/>
        <end position="416"/>
    </location>
</feature>
<feature type="lipid moiety-binding region" description="GPI-anchor amidated serine" evidence="2">
    <location>
        <position position="417"/>
    </location>
</feature>
<feature type="glycosylation site" description="N-linked (GlcNAc...) asparagine" evidence="2">
    <location>
        <position position="45"/>
    </location>
</feature>
<feature type="glycosylation site" description="N-linked (GlcNAc...) asparagine" evidence="2">
    <location>
        <position position="61"/>
    </location>
</feature>
<feature type="glycosylation site" description="N-linked (GlcNAc...) asparagine" evidence="2">
    <location>
        <position position="103"/>
    </location>
</feature>
<feature type="glycosylation site" description="N-linked (GlcNAc...) asparagine" evidence="2">
    <location>
        <position position="152"/>
    </location>
</feature>
<feature type="glycosylation site" description="N-linked (GlcNAc...) asparagine" evidence="2">
    <location>
        <position position="176"/>
    </location>
</feature>
<feature type="glycosylation site" description="N-linked (GlcNAc...) asparagine" evidence="2">
    <location>
        <position position="189"/>
    </location>
</feature>
<feature type="glycosylation site" description="N-linked (GlcNAc...) asparagine" evidence="2">
    <location>
        <position position="192"/>
    </location>
</feature>
<feature type="glycosylation site" description="N-linked (GlcNAc...) asparagine" evidence="2">
    <location>
        <position position="234"/>
    </location>
</feature>
<feature type="glycosylation site" description="N-linked (GlcNAc...) asparagine" evidence="2">
    <location>
        <position position="364"/>
    </location>
</feature>
<feature type="glycosylation site" description="N-linked (GlcNAc...) asparagine" evidence="2">
    <location>
        <position position="389"/>
    </location>
</feature>
<feature type="glycosylation site" description="N-linked (GlcNAc...) asparagine" evidence="2">
    <location>
        <position position="425"/>
    </location>
</feature>
<proteinExistence type="evidence at protein level"/>
<sequence length="440" mass="49284">MEYQILKMSSCLFILLFLTPGILCICPLQCTCTERHRHVDCSGRNLTTLPPGLQENIIHLNLSYNHFTDLHNQLTPYTNLRTLDISNNRLESLPAQLPRSLWNMSAANNNIKLLDKSDTAYQWNLKYLDVSKNMLEKVVLIKNTLRSLEVLNLSSNKLWTVPTNMPSKLHIVDLSNNSLTQILPGTLINLTNLTHLYLHNNKFTFIPEQSFDQLLQLQEITLHNNRWSCDHKQNITYLLKWVMETKAHVIGTPCSKQVSSLKEQSMYPTPPGFTSSLFTMSEMQTVDTINSLSMVTQPKVTKTPKQYRGKETTFGVTLSKDTTFSSTDRAVVAYPEDTPTEMTNSHEAAAATLTIHLQDGMSSNASLTSATKSPPSPVTLSIARGMPNNFSEMPRQSTTLNLRREETTANGNTRPPSAASAWKVNASLLLMLNAVVMLAG</sequence>
<evidence type="ECO:0000250" key="1"/>
<evidence type="ECO:0000255" key="2"/>
<evidence type="ECO:0000269" key="3">
    <source>
    </source>
</evidence>
<evidence type="ECO:0000305" key="4"/>
<accession>Q63912</accession>
<gene>
    <name type="primary">Omg</name>
    <name type="synonym">Omgp</name>
</gene>
<protein>
    <recommendedName>
        <fullName>Oligodendrocyte-myelin glycoprotein</fullName>
    </recommendedName>
</protein>
<reference key="1">
    <citation type="journal article" date="1993" name="Genomics">
        <title>The oligodendrocyte-myelin glycoprotein of mouse: primary structure and gene structure.</title>
        <authorList>
            <person name="Mikol D.D."/>
            <person name="Rongnoparut P."/>
            <person name="Allwardt B.A."/>
            <person name="Marton L.S."/>
            <person name="Stefansson K."/>
        </authorList>
    </citation>
    <scope>NUCLEOTIDE SEQUENCE</scope>
    <source>
        <strain>C57BL/6J</strain>
    </source>
</reference>
<reference key="2">
    <citation type="journal article" date="2004" name="Genome Res.">
        <title>The status, quality, and expansion of the NIH full-length cDNA project: the Mammalian Gene Collection (MGC).</title>
        <authorList>
            <consortium name="The MGC Project Team"/>
        </authorList>
    </citation>
    <scope>NUCLEOTIDE SEQUENCE [LARGE SCALE MRNA]</scope>
    <source>
        <strain>C57BL/6J</strain>
        <tissue>Retina</tissue>
    </source>
</reference>
<reference key="3">
    <citation type="journal article" date="2002" name="Nature">
        <title>Oligodendrocyte-myelin glycoprotein is a Nogo receptor ligand that inhibits neurite outgrowth.</title>
        <authorList>
            <person name="Wang K.C."/>
            <person name="Koprivica V."/>
            <person name="Kim J.A."/>
            <person name="Sivasankaran R."/>
            <person name="Guo Y."/>
            <person name="Neve R.L."/>
            <person name="He Z."/>
        </authorList>
    </citation>
    <scope>INTERACTION WITH RTN4R</scope>
</reference>
<comment type="function">
    <text>Cell adhesion molecule contributing to the interactive process required for myelination in the central nervous system.</text>
</comment>
<comment type="subunit">
    <text evidence="3">Binds to RTN4R.</text>
</comment>
<comment type="subcellular location">
    <subcellularLocation>
        <location>Cell membrane</location>
        <topology>Lipid-anchor</topology>
        <topology>GPI-anchor</topology>
    </subcellularLocation>
</comment>
<comment type="tissue specificity">
    <text>Oligodendrocytes and myelin of the central nervous system.</text>
</comment>
<comment type="PTM">
    <text evidence="4">O-glycosylated in its Ser/Thr-rich repeat domain.</text>
</comment>
<comment type="caution">
    <text evidence="4">Do not confuse oligodendrocyte-myelin glycoprotein (OMG) with myelin-oligodendrocyte glycoprotein (MOG).</text>
</comment>